<evidence type="ECO:0000255" key="1">
    <source>
        <dbReference type="HAMAP-Rule" id="MF_00176"/>
    </source>
</evidence>
<evidence type="ECO:0000256" key="2">
    <source>
        <dbReference type="SAM" id="MobiDB-lite"/>
    </source>
</evidence>
<comment type="function">
    <text evidence="1">Catalyzes the attachment of serine to tRNA(Ser). Is also able to aminoacylate tRNA(Sec) with serine, to form the misacylated tRNA L-seryl-tRNA(Sec), which will be further converted into selenocysteinyl-tRNA(Sec).</text>
</comment>
<comment type="catalytic activity">
    <reaction evidence="1">
        <text>tRNA(Ser) + L-serine + ATP = L-seryl-tRNA(Ser) + AMP + diphosphate + H(+)</text>
        <dbReference type="Rhea" id="RHEA:12292"/>
        <dbReference type="Rhea" id="RHEA-COMP:9669"/>
        <dbReference type="Rhea" id="RHEA-COMP:9703"/>
        <dbReference type="ChEBI" id="CHEBI:15378"/>
        <dbReference type="ChEBI" id="CHEBI:30616"/>
        <dbReference type="ChEBI" id="CHEBI:33019"/>
        <dbReference type="ChEBI" id="CHEBI:33384"/>
        <dbReference type="ChEBI" id="CHEBI:78442"/>
        <dbReference type="ChEBI" id="CHEBI:78533"/>
        <dbReference type="ChEBI" id="CHEBI:456215"/>
        <dbReference type="EC" id="6.1.1.11"/>
    </reaction>
</comment>
<comment type="catalytic activity">
    <reaction evidence="1">
        <text>tRNA(Sec) + L-serine + ATP = L-seryl-tRNA(Sec) + AMP + diphosphate + H(+)</text>
        <dbReference type="Rhea" id="RHEA:42580"/>
        <dbReference type="Rhea" id="RHEA-COMP:9742"/>
        <dbReference type="Rhea" id="RHEA-COMP:10128"/>
        <dbReference type="ChEBI" id="CHEBI:15378"/>
        <dbReference type="ChEBI" id="CHEBI:30616"/>
        <dbReference type="ChEBI" id="CHEBI:33019"/>
        <dbReference type="ChEBI" id="CHEBI:33384"/>
        <dbReference type="ChEBI" id="CHEBI:78442"/>
        <dbReference type="ChEBI" id="CHEBI:78533"/>
        <dbReference type="ChEBI" id="CHEBI:456215"/>
        <dbReference type="EC" id="6.1.1.11"/>
    </reaction>
</comment>
<comment type="pathway">
    <text evidence="1">Aminoacyl-tRNA biosynthesis; selenocysteinyl-tRNA(Sec) biosynthesis; L-seryl-tRNA(Sec) from L-serine and tRNA(Sec): step 1/1.</text>
</comment>
<comment type="subunit">
    <text evidence="1">Homodimer. The tRNA molecule binds across the dimer.</text>
</comment>
<comment type="subcellular location">
    <subcellularLocation>
        <location evidence="1">Cytoplasm</location>
    </subcellularLocation>
</comment>
<comment type="domain">
    <text evidence="1">Consists of two distinct domains, a catalytic core and a N-terminal extension that is involved in tRNA binding.</text>
</comment>
<comment type="similarity">
    <text evidence="1">Belongs to the class-II aminoacyl-tRNA synthetase family. Type-1 seryl-tRNA synthetase subfamily.</text>
</comment>
<accession>A1R120</accession>
<protein>
    <recommendedName>
        <fullName evidence="1">Serine--tRNA ligase</fullName>
        <ecNumber evidence="1">6.1.1.11</ecNumber>
    </recommendedName>
    <alternativeName>
        <fullName evidence="1">Seryl-tRNA synthetase</fullName>
        <shortName evidence="1">SerRS</shortName>
    </alternativeName>
    <alternativeName>
        <fullName evidence="1">Seryl-tRNA(Ser/Sec) synthetase</fullName>
    </alternativeName>
</protein>
<organism>
    <name type="scientific">Paenarthrobacter aurescens (strain TC1)</name>
    <dbReference type="NCBI Taxonomy" id="290340"/>
    <lineage>
        <taxon>Bacteria</taxon>
        <taxon>Bacillati</taxon>
        <taxon>Actinomycetota</taxon>
        <taxon>Actinomycetes</taxon>
        <taxon>Micrococcales</taxon>
        <taxon>Micrococcaceae</taxon>
        <taxon>Paenarthrobacter</taxon>
    </lineage>
</organism>
<dbReference type="EC" id="6.1.1.11" evidence="1"/>
<dbReference type="EMBL" id="CP000474">
    <property type="protein sequence ID" value="ABM09166.1"/>
    <property type="molecule type" value="Genomic_DNA"/>
</dbReference>
<dbReference type="RefSeq" id="WP_011772880.1">
    <property type="nucleotide sequence ID" value="NC_008711.1"/>
</dbReference>
<dbReference type="SMR" id="A1R120"/>
<dbReference type="STRING" id="290340.AAur_0103"/>
<dbReference type="KEGG" id="aau:AAur_0103"/>
<dbReference type="eggNOG" id="COG0172">
    <property type="taxonomic scope" value="Bacteria"/>
</dbReference>
<dbReference type="HOGENOM" id="CLU_023797_0_1_11"/>
<dbReference type="OrthoDB" id="9804647at2"/>
<dbReference type="UniPathway" id="UPA00906">
    <property type="reaction ID" value="UER00895"/>
</dbReference>
<dbReference type="Proteomes" id="UP000000637">
    <property type="component" value="Chromosome"/>
</dbReference>
<dbReference type="GO" id="GO:0005737">
    <property type="term" value="C:cytoplasm"/>
    <property type="evidence" value="ECO:0007669"/>
    <property type="project" value="UniProtKB-SubCell"/>
</dbReference>
<dbReference type="GO" id="GO:0005524">
    <property type="term" value="F:ATP binding"/>
    <property type="evidence" value="ECO:0007669"/>
    <property type="project" value="UniProtKB-UniRule"/>
</dbReference>
<dbReference type="GO" id="GO:0004828">
    <property type="term" value="F:serine-tRNA ligase activity"/>
    <property type="evidence" value="ECO:0007669"/>
    <property type="project" value="UniProtKB-UniRule"/>
</dbReference>
<dbReference type="GO" id="GO:0016260">
    <property type="term" value="P:selenocysteine biosynthetic process"/>
    <property type="evidence" value="ECO:0007669"/>
    <property type="project" value="UniProtKB-UniRule"/>
</dbReference>
<dbReference type="GO" id="GO:0006434">
    <property type="term" value="P:seryl-tRNA aminoacylation"/>
    <property type="evidence" value="ECO:0007669"/>
    <property type="project" value="UniProtKB-UniRule"/>
</dbReference>
<dbReference type="CDD" id="cd00770">
    <property type="entry name" value="SerRS_core"/>
    <property type="match status" value="1"/>
</dbReference>
<dbReference type="Gene3D" id="3.30.930.10">
    <property type="entry name" value="Bira Bifunctional Protein, Domain 2"/>
    <property type="match status" value="1"/>
</dbReference>
<dbReference type="Gene3D" id="1.10.287.40">
    <property type="entry name" value="Serine-tRNA synthetase, tRNA binding domain"/>
    <property type="match status" value="1"/>
</dbReference>
<dbReference type="HAMAP" id="MF_00176">
    <property type="entry name" value="Ser_tRNA_synth_type1"/>
    <property type="match status" value="1"/>
</dbReference>
<dbReference type="InterPro" id="IPR002314">
    <property type="entry name" value="aa-tRNA-synt_IIb"/>
</dbReference>
<dbReference type="InterPro" id="IPR006195">
    <property type="entry name" value="aa-tRNA-synth_II"/>
</dbReference>
<dbReference type="InterPro" id="IPR045864">
    <property type="entry name" value="aa-tRNA-synth_II/BPL/LPL"/>
</dbReference>
<dbReference type="InterPro" id="IPR002317">
    <property type="entry name" value="Ser-tRNA-ligase_type_1"/>
</dbReference>
<dbReference type="InterPro" id="IPR015866">
    <property type="entry name" value="Ser-tRNA-synth_1_N"/>
</dbReference>
<dbReference type="InterPro" id="IPR042103">
    <property type="entry name" value="SerRS_1_N_sf"/>
</dbReference>
<dbReference type="InterPro" id="IPR033729">
    <property type="entry name" value="SerRS_core"/>
</dbReference>
<dbReference type="InterPro" id="IPR010978">
    <property type="entry name" value="tRNA-bd_arm"/>
</dbReference>
<dbReference type="NCBIfam" id="TIGR00414">
    <property type="entry name" value="serS"/>
    <property type="match status" value="1"/>
</dbReference>
<dbReference type="PANTHER" id="PTHR11778">
    <property type="entry name" value="SERYL-TRNA SYNTHETASE"/>
    <property type="match status" value="1"/>
</dbReference>
<dbReference type="Pfam" id="PF02403">
    <property type="entry name" value="Seryl_tRNA_N"/>
    <property type="match status" value="1"/>
</dbReference>
<dbReference type="Pfam" id="PF00587">
    <property type="entry name" value="tRNA-synt_2b"/>
    <property type="match status" value="1"/>
</dbReference>
<dbReference type="PIRSF" id="PIRSF001529">
    <property type="entry name" value="Ser-tRNA-synth_IIa"/>
    <property type="match status" value="1"/>
</dbReference>
<dbReference type="PRINTS" id="PR00981">
    <property type="entry name" value="TRNASYNTHSER"/>
</dbReference>
<dbReference type="SUPFAM" id="SSF55681">
    <property type="entry name" value="Class II aaRS and biotin synthetases"/>
    <property type="match status" value="1"/>
</dbReference>
<dbReference type="SUPFAM" id="SSF46589">
    <property type="entry name" value="tRNA-binding arm"/>
    <property type="match status" value="1"/>
</dbReference>
<dbReference type="PROSITE" id="PS50862">
    <property type="entry name" value="AA_TRNA_LIGASE_II"/>
    <property type="match status" value="1"/>
</dbReference>
<name>SYS_PAEAT</name>
<feature type="chain" id="PRO_1000019611" description="Serine--tRNA ligase">
    <location>
        <begin position="1"/>
        <end position="426"/>
    </location>
</feature>
<feature type="region of interest" description="Disordered" evidence="2">
    <location>
        <begin position="1"/>
        <end position="20"/>
    </location>
</feature>
<feature type="compositionally biased region" description="Basic and acidic residues" evidence="2">
    <location>
        <begin position="1"/>
        <end position="15"/>
    </location>
</feature>
<feature type="binding site" evidence="1">
    <location>
        <begin position="228"/>
        <end position="230"/>
    </location>
    <ligand>
        <name>L-serine</name>
        <dbReference type="ChEBI" id="CHEBI:33384"/>
    </ligand>
</feature>
<feature type="binding site" evidence="1">
    <location>
        <begin position="259"/>
        <end position="261"/>
    </location>
    <ligand>
        <name>ATP</name>
        <dbReference type="ChEBI" id="CHEBI:30616"/>
    </ligand>
</feature>
<feature type="binding site" evidence="1">
    <location>
        <position position="275"/>
    </location>
    <ligand>
        <name>ATP</name>
        <dbReference type="ChEBI" id="CHEBI:30616"/>
    </ligand>
</feature>
<feature type="binding site" evidence="1">
    <location>
        <position position="282"/>
    </location>
    <ligand>
        <name>L-serine</name>
        <dbReference type="ChEBI" id="CHEBI:33384"/>
    </ligand>
</feature>
<feature type="binding site" evidence="1">
    <location>
        <begin position="346"/>
        <end position="349"/>
    </location>
    <ligand>
        <name>ATP</name>
        <dbReference type="ChEBI" id="CHEBI:30616"/>
    </ligand>
</feature>
<feature type="binding site" evidence="1">
    <location>
        <position position="386"/>
    </location>
    <ligand>
        <name>L-serine</name>
        <dbReference type="ChEBI" id="CHEBI:33384"/>
    </ligand>
</feature>
<proteinExistence type="inferred from homology"/>
<keyword id="KW-0030">Aminoacyl-tRNA synthetase</keyword>
<keyword id="KW-0067">ATP-binding</keyword>
<keyword id="KW-0963">Cytoplasm</keyword>
<keyword id="KW-0436">Ligase</keyword>
<keyword id="KW-0547">Nucleotide-binding</keyword>
<keyword id="KW-0648">Protein biosynthesis</keyword>
<sequence>MIDVKDLSENPDKFRASQRARGADESVVDAIISADSDRRAALIRHETLRAEQNAFGKKVAQAKGEEKQALLAEVKELANSVKAASAEAAAAQAKQEELLRVIPNLVVDGVPEGGEDDYVVLKTVGTPREFTDFEPKDHLEIGELIGAIDMERGAKVSGSRFYFLRGVGARLEMALLQMAMEQAIDAGFVPMITPTLVRPETMQGTGFDVKHDAEIYRLAEDDLYLVGTSEVALAGYHADEILDLSAGPIRYAGQSSCYRREAGSHGKDTRGIIRVHQFNKVEMFIYTTVEEAAAEHERLLAWEEEMLAKCELPYRVIDTAAGDLGMSAARKFDCEAWVPTQNAYRELTSTSNCTTFQARRLNIRERVINDEGVAKGTRAVATLNGTLATTRWIVAILEHHQNPDGSVNVPKALQKYLGGLEVLPVL</sequence>
<reference key="1">
    <citation type="journal article" date="2006" name="PLoS Genet.">
        <title>Secrets of soil survival revealed by the genome sequence of Arthrobacter aurescens TC1.</title>
        <authorList>
            <person name="Mongodin E.F."/>
            <person name="Shapir N."/>
            <person name="Daugherty S.C."/>
            <person name="DeBoy R.T."/>
            <person name="Emerson J.B."/>
            <person name="Shvartzbeyn A."/>
            <person name="Radune D."/>
            <person name="Vamathevan J."/>
            <person name="Riggs F."/>
            <person name="Grinberg V."/>
            <person name="Khouri H.M."/>
            <person name="Wackett L.P."/>
            <person name="Nelson K.E."/>
            <person name="Sadowsky M.J."/>
        </authorList>
    </citation>
    <scope>NUCLEOTIDE SEQUENCE [LARGE SCALE GENOMIC DNA]</scope>
    <source>
        <strain>TC1</strain>
    </source>
</reference>
<gene>
    <name evidence="1" type="primary">serS</name>
    <name type="ordered locus">AAur_0103</name>
</gene>